<protein>
    <recommendedName>
        <fullName>Polycomb complex protein BMI-1-B</fullName>
    </recommendedName>
    <alternativeName>
        <fullName>Polycomb group RING finger protein 4-B</fullName>
    </alternativeName>
</protein>
<keyword id="KW-0156">Chromatin regulator</keyword>
<keyword id="KW-0479">Metal-binding</keyword>
<keyword id="KW-0539">Nucleus</keyword>
<keyword id="KW-1185">Reference proteome</keyword>
<keyword id="KW-0678">Repressor</keyword>
<keyword id="KW-0804">Transcription</keyword>
<keyword id="KW-0805">Transcription regulation</keyword>
<keyword id="KW-0862">Zinc</keyword>
<keyword id="KW-0863">Zinc-finger</keyword>
<accession>Q640D5</accession>
<comment type="function">
    <text evidence="1">Component of a Polycomb group (PcG) multiprotein PRC1-like complex, a complex class required to maintain the transcriptionally repressive state of many genes, including Hox genes, throughout development. PcG PRC1 complex acts via chromatin remodeling and modification of histones; it mediates monoubiquitination of histone H2A 'Lys-119', rendering chromatin heritably changed in its expressibility. In the PRC1 complex, it is required to stimulate the E3 ubiquitin-protein ligase activity of rnf2 (By similarity).</text>
</comment>
<comment type="subunit">
    <text evidence="1">Component of a PRC1-like complex. Interacts with cbx4 (By similarity).</text>
</comment>
<comment type="subcellular location">
    <subcellularLocation>
        <location evidence="1">Nucleus</location>
    </subcellularLocation>
</comment>
<reference key="1">
    <citation type="submission" date="2004-09" db="EMBL/GenBank/DDBJ databases">
        <authorList>
            <consortium name="NIH - Xenopus Gene Collection (XGC) project"/>
        </authorList>
    </citation>
    <scope>NUCLEOTIDE SEQUENCE [LARGE SCALE MRNA]</scope>
    <source>
        <tissue>Brain</tissue>
    </source>
</reference>
<proteinExistence type="evidence at transcript level"/>
<evidence type="ECO:0000250" key="1"/>
<evidence type="ECO:0000255" key="2"/>
<evidence type="ECO:0000255" key="3">
    <source>
        <dbReference type="PROSITE-ProRule" id="PRU00175"/>
    </source>
</evidence>
<evidence type="ECO:0000256" key="4">
    <source>
        <dbReference type="SAM" id="MobiDB-lite"/>
    </source>
</evidence>
<gene>
    <name type="primary">bmi1b</name>
    <name type="synonym">pcgf4</name>
</gene>
<name>BMI1B_XENLA</name>
<feature type="chain" id="PRO_0000296633" description="Polycomb complex protein BMI-1-B">
    <location>
        <begin position="1"/>
        <end position="323"/>
    </location>
</feature>
<feature type="zinc finger region" description="RING-type" evidence="3">
    <location>
        <begin position="18"/>
        <end position="57"/>
    </location>
</feature>
<feature type="region of interest" description="Disordered" evidence="4">
    <location>
        <begin position="238"/>
        <end position="310"/>
    </location>
</feature>
<feature type="short sequence motif" description="Nuclear localization signal" evidence="2">
    <location>
        <begin position="81"/>
        <end position="95"/>
    </location>
</feature>
<feature type="compositionally biased region" description="Low complexity" evidence="4">
    <location>
        <begin position="287"/>
        <end position="301"/>
    </location>
</feature>
<organism>
    <name type="scientific">Xenopus laevis</name>
    <name type="common">African clawed frog</name>
    <dbReference type="NCBI Taxonomy" id="8355"/>
    <lineage>
        <taxon>Eukaryota</taxon>
        <taxon>Metazoa</taxon>
        <taxon>Chordata</taxon>
        <taxon>Craniata</taxon>
        <taxon>Vertebrata</taxon>
        <taxon>Euteleostomi</taxon>
        <taxon>Amphibia</taxon>
        <taxon>Batrachia</taxon>
        <taxon>Anura</taxon>
        <taxon>Pipoidea</taxon>
        <taxon>Pipidae</taxon>
        <taxon>Xenopodinae</taxon>
        <taxon>Xenopus</taxon>
        <taxon>Xenopus</taxon>
    </lineage>
</organism>
<sequence length="323" mass="36573">MHRTTRIKITELNPHLMCVLCGGYFIDAATIIECLHSFCKTCIVRYLETSKYCPICDVQVHKTRPLLNIRADKTLQDIVYKLVPGLFKGEMKRRRDFYAAHPSVDAANGSNEDRGEVADEDKRIITDDEIISLSIEFFDQNRANRKGSKDKEKSKDEANDKRYLRCPAALTIMHLRKFLRSKMDIPSNFQIDVMYEEEPLKDYYTLMDIAYIYTWRRNGPLPLKYRVRPTCKRVKINPHTDRINNTSGDMESDSGSDKAGSLGGGIPSTSSCMPRPPVQSPHPHFPHISSTINGTNSSSSHQNPFANRARKISLNGVSAISSG</sequence>
<dbReference type="EMBL" id="BC082694">
    <property type="protein sequence ID" value="AAH82694.1"/>
    <property type="molecule type" value="mRNA"/>
</dbReference>
<dbReference type="RefSeq" id="NP_001088007.1">
    <property type="nucleotide sequence ID" value="NM_001094538.1"/>
</dbReference>
<dbReference type="SMR" id="Q640D5"/>
<dbReference type="DNASU" id="494698"/>
<dbReference type="GeneID" id="494698"/>
<dbReference type="KEGG" id="xla:494698"/>
<dbReference type="AGR" id="Xenbase:XB-GENE-942193"/>
<dbReference type="CTD" id="494698"/>
<dbReference type="Xenbase" id="XB-GENE-942193">
    <property type="gene designation" value="bmi1.L"/>
</dbReference>
<dbReference type="OrthoDB" id="1305878at2759"/>
<dbReference type="Proteomes" id="UP000186698">
    <property type="component" value="Chromosome 6L"/>
</dbReference>
<dbReference type="Bgee" id="494698">
    <property type="expression patterns" value="Expressed in brain and 19 other cell types or tissues"/>
</dbReference>
<dbReference type="GO" id="GO:0031519">
    <property type="term" value="C:PcG protein complex"/>
    <property type="evidence" value="ECO:0000250"/>
    <property type="project" value="UniProtKB"/>
</dbReference>
<dbReference type="GO" id="GO:0035102">
    <property type="term" value="C:PRC1 complex"/>
    <property type="evidence" value="ECO:0000318"/>
    <property type="project" value="GO_Central"/>
</dbReference>
<dbReference type="GO" id="GO:1990841">
    <property type="term" value="F:promoter-specific chromatin binding"/>
    <property type="evidence" value="ECO:0000250"/>
    <property type="project" value="UniProtKB"/>
</dbReference>
<dbReference type="GO" id="GO:0008270">
    <property type="term" value="F:zinc ion binding"/>
    <property type="evidence" value="ECO:0007669"/>
    <property type="project" value="UniProtKB-KW"/>
</dbReference>
<dbReference type="GO" id="GO:0045814">
    <property type="term" value="P:negative regulation of gene expression, epigenetic"/>
    <property type="evidence" value="ECO:0000250"/>
    <property type="project" value="UniProtKB"/>
</dbReference>
<dbReference type="GO" id="GO:0000122">
    <property type="term" value="P:negative regulation of transcription by RNA polymerase II"/>
    <property type="evidence" value="ECO:0000318"/>
    <property type="project" value="GO_Central"/>
</dbReference>
<dbReference type="CDD" id="cd17165">
    <property type="entry name" value="RAWUL_PCGF4"/>
    <property type="match status" value="1"/>
</dbReference>
<dbReference type="CDD" id="cd16736">
    <property type="entry name" value="RING-HC_PCGF4"/>
    <property type="match status" value="1"/>
</dbReference>
<dbReference type="FunFam" id="3.10.20.90:FF:000106">
    <property type="entry name" value="Polycomb complex protein BMI-1"/>
    <property type="match status" value="1"/>
</dbReference>
<dbReference type="FunFam" id="3.30.40.10:FF:000082">
    <property type="entry name" value="Polycomb group ring finger 2"/>
    <property type="match status" value="1"/>
</dbReference>
<dbReference type="Gene3D" id="3.10.20.90">
    <property type="entry name" value="Phosphatidylinositol 3-kinase Catalytic Subunit, Chain A, domain 1"/>
    <property type="match status" value="1"/>
</dbReference>
<dbReference type="Gene3D" id="3.30.40.10">
    <property type="entry name" value="Zinc/RING finger domain, C3HC4 (zinc finger)"/>
    <property type="match status" value="1"/>
</dbReference>
<dbReference type="InterPro" id="IPR032443">
    <property type="entry name" value="RAWUL"/>
</dbReference>
<dbReference type="InterPro" id="IPR001841">
    <property type="entry name" value="Znf_RING"/>
</dbReference>
<dbReference type="InterPro" id="IPR013083">
    <property type="entry name" value="Znf_RING/FYVE/PHD"/>
</dbReference>
<dbReference type="InterPro" id="IPR017907">
    <property type="entry name" value="Znf_RING_CS"/>
</dbReference>
<dbReference type="PANTHER" id="PTHR10825:SF21">
    <property type="entry name" value="POLYCOMB COMPLEX PROTEIN BMI-1"/>
    <property type="match status" value="1"/>
</dbReference>
<dbReference type="PANTHER" id="PTHR10825">
    <property type="entry name" value="RING FINGER DOMAIN-CONTAINING, POLYCOMB GROUP COMPONENT"/>
    <property type="match status" value="1"/>
</dbReference>
<dbReference type="Pfam" id="PF16207">
    <property type="entry name" value="RAWUL"/>
    <property type="match status" value="1"/>
</dbReference>
<dbReference type="Pfam" id="PF13923">
    <property type="entry name" value="zf-C3HC4_2"/>
    <property type="match status" value="1"/>
</dbReference>
<dbReference type="SMART" id="SM00184">
    <property type="entry name" value="RING"/>
    <property type="match status" value="1"/>
</dbReference>
<dbReference type="SUPFAM" id="SSF57850">
    <property type="entry name" value="RING/U-box"/>
    <property type="match status" value="1"/>
</dbReference>
<dbReference type="PROSITE" id="PS00518">
    <property type="entry name" value="ZF_RING_1"/>
    <property type="match status" value="1"/>
</dbReference>
<dbReference type="PROSITE" id="PS50089">
    <property type="entry name" value="ZF_RING_2"/>
    <property type="match status" value="1"/>
</dbReference>